<sequence>GETISIYYDPGKFPALMPLKNGNYEERNGGVPQRGNITIHLQQFNEDLDKMTPDKNFGGIGVIDFERWKPIFRQNWGNTEIHKKYSIELVRYEHPKWSESMIEAEATKKFEKYARLFMEETLKLAKKTRKRAKWGYYGFPYCYNYTPNNPGPDCDAKAMIENDRLSWMYNNQEILFPSVYVRHELTPDQRVYLVQGRIKEAVRISNNLKHSPKVLSYWWYVYQDKMDIFLSETDVKKTFQEIVTNGGDGIIIWGSSSDVNSLSKCKRLREYLLNTLGPFAVNVTETVN</sequence>
<evidence type="ECO:0000250" key="1"/>
<evidence type="ECO:0000250" key="2">
    <source>
        <dbReference type="UniProtKB" id="Q08169"/>
    </source>
</evidence>
<evidence type="ECO:0000255" key="3"/>
<evidence type="ECO:0000269" key="4">
    <source ref="1"/>
</evidence>
<evidence type="ECO:0000269" key="5">
    <source ref="2"/>
</evidence>
<evidence type="ECO:0000303" key="6">
    <source ref="1"/>
</evidence>
<evidence type="ECO:0000303" key="7">
    <source ref="2"/>
</evidence>
<evidence type="ECO:0000305" key="8"/>
<name>HUGA_POLPI</name>
<accession>P86687</accession>
<protein>
    <recommendedName>
        <fullName evidence="6 7">Hyaluronidase</fullName>
        <shortName evidence="2">Hya</shortName>
        <ecNumber>3.2.1.35</ecNumber>
    </recommendedName>
    <alternativeName>
        <fullName evidence="2">Hyaluronoglucosaminidase</fullName>
    </alternativeName>
</protein>
<comment type="function">
    <text evidence="1">Hydrolyzes high molecular weight hyaluronic acid to produce small oligosaccharides.</text>
</comment>
<comment type="catalytic activity">
    <reaction evidence="4">
        <text>Random hydrolysis of (1-&gt;4)-linkages between N-acetyl-beta-D-glucosamine and D-glucuronate residues in hyaluronate.</text>
        <dbReference type="EC" id="3.2.1.35"/>
    </reaction>
</comment>
<comment type="subcellular location">
    <subcellularLocation>
        <location evidence="4">Secreted</location>
    </subcellularLocation>
</comment>
<comment type="tissue specificity">
    <text evidence="4">Expressed by the venom gland.</text>
</comment>
<comment type="allergen">
    <text evidence="4">Causes an allergic reaction in human.</text>
</comment>
<comment type="miscellaneous">
    <text evidence="4">On the 2D-gel the determined pI of this protein is: 9.5, its MW is: 44.1 kDa.</text>
</comment>
<comment type="similarity">
    <text evidence="3">Belongs to the glycosyl hydrolase 56 family.</text>
</comment>
<keyword id="KW-0020">Allergen</keyword>
<keyword id="KW-0903">Direct protein sequencing</keyword>
<keyword id="KW-1015">Disulfide bond</keyword>
<keyword id="KW-0325">Glycoprotein</keyword>
<keyword id="KW-0326">Glycosidase</keyword>
<keyword id="KW-0378">Hydrolase</keyword>
<keyword id="KW-0964">Secreted</keyword>
<feature type="chain" id="PRO_0000396653" description="Hyaluronidase">
    <location>
        <begin position="1" status="less than"/>
        <end position="288" status="greater than"/>
    </location>
</feature>
<feature type="active site" description="Proton donor" evidence="2">
    <location>
        <position position="66"/>
    </location>
</feature>
<feature type="glycosylation site" description="N-linked (GlcNAc...) asparagine" evidence="3">
    <location>
        <position position="36"/>
    </location>
</feature>
<feature type="glycosylation site" description="N-linked (GlcNAc...) asparagine" evidence="3">
    <location>
        <position position="282"/>
    </location>
</feature>
<feature type="disulfide bond" evidence="2">
    <location>
        <begin position="142"/>
        <end position="154"/>
    </location>
</feature>
<feature type="disulfide bond" evidence="2">
    <location>
        <begin status="unknown"/>
        <end position="265"/>
    </location>
</feature>
<feature type="non-terminal residue" evidence="8">
    <location>
        <position position="1"/>
    </location>
</feature>
<feature type="non-terminal residue" evidence="8">
    <location>
        <position position="288"/>
    </location>
</feature>
<reference evidence="8" key="1">
    <citation type="thesis" date="2008" institute="Sao Paulo State University" country="Brazil">
        <title>Molecular characterization of Hyaluronidase allergen from the venom of the social wasp Polybia paulista (Hymenoptera, Vespidae).</title>
        <authorList>
            <person name="Pinto J.R.A.S."/>
        </authorList>
    </citation>
    <scope>PROTEIN SEQUENCE</scope>
    <scope>CATALYTIC ACTIVITY</scope>
    <scope>SUBCELLULAR LOCATION</scope>
    <scope>TISSUE SPECIFICITY</scope>
    <scope>ALLERGEN</scope>
    <source>
        <tissue evidence="4">Venom</tissue>
    </source>
</reference>
<reference evidence="8" key="2">
    <citation type="submission" date="2010-06" db="UniProtKB">
        <title>Structural characterization of hyaluronidase isoforms from the venom of the social wasp Polybia paulista (Hymenoptera, Vespidae).</title>
        <authorList>
            <person name="Pinto J.R.A.S."/>
            <person name="Santos L.D."/>
            <person name="Arcuri H.A."/>
            <person name="Dias N.B."/>
            <person name="Palma M.S."/>
        </authorList>
    </citation>
    <scope>PROTEIN SEQUENCE</scope>
    <source>
        <tissue evidence="5">Venom</tissue>
    </source>
</reference>
<organism>
    <name type="scientific">Polybia paulista</name>
    <name type="common">Neotropical social wasp</name>
    <name type="synonym">Swarm-founding polistine wasp</name>
    <dbReference type="NCBI Taxonomy" id="291283"/>
    <lineage>
        <taxon>Eukaryota</taxon>
        <taxon>Metazoa</taxon>
        <taxon>Ecdysozoa</taxon>
        <taxon>Arthropoda</taxon>
        <taxon>Hexapoda</taxon>
        <taxon>Insecta</taxon>
        <taxon>Pterygota</taxon>
        <taxon>Neoptera</taxon>
        <taxon>Endopterygota</taxon>
        <taxon>Hymenoptera</taxon>
        <taxon>Apocrita</taxon>
        <taxon>Aculeata</taxon>
        <taxon>Vespoidea</taxon>
        <taxon>Vespidae</taxon>
        <taxon>Polistinae</taxon>
        <taxon>Epiponini</taxon>
        <taxon>Polybia</taxon>
    </lineage>
</organism>
<proteinExistence type="evidence at protein level"/>
<dbReference type="EC" id="3.2.1.35"/>
<dbReference type="SMR" id="P86687"/>
<dbReference type="Allergome" id="12007">
    <property type="allergen name" value="Poly p 2.0101"/>
</dbReference>
<dbReference type="Allergome" id="8808">
    <property type="allergen name" value="Poly p 2"/>
</dbReference>
<dbReference type="GO" id="GO:0005576">
    <property type="term" value="C:extracellular region"/>
    <property type="evidence" value="ECO:0000314"/>
    <property type="project" value="UniProtKB"/>
</dbReference>
<dbReference type="GO" id="GO:0004415">
    <property type="term" value="F:hyalurononglucosaminidase activity"/>
    <property type="evidence" value="ECO:0000314"/>
    <property type="project" value="UniProtKB"/>
</dbReference>
<dbReference type="GO" id="GO:0005975">
    <property type="term" value="P:carbohydrate metabolic process"/>
    <property type="evidence" value="ECO:0007669"/>
    <property type="project" value="InterPro"/>
</dbReference>
<dbReference type="GO" id="GO:0006952">
    <property type="term" value="P:defense response"/>
    <property type="evidence" value="ECO:0007669"/>
    <property type="project" value="InterPro"/>
</dbReference>
<dbReference type="GO" id="GO:0030214">
    <property type="term" value="P:hyaluronan catabolic process"/>
    <property type="evidence" value="ECO:0007669"/>
    <property type="project" value="TreeGrafter"/>
</dbReference>
<dbReference type="Gene3D" id="3.20.20.70">
    <property type="entry name" value="Aldolase class I"/>
    <property type="match status" value="1"/>
</dbReference>
<dbReference type="InterPro" id="IPR013785">
    <property type="entry name" value="Aldolase_TIM"/>
</dbReference>
<dbReference type="InterPro" id="IPR017853">
    <property type="entry name" value="Glycoside_hydrolase_SF"/>
</dbReference>
<dbReference type="InterPro" id="IPR018155">
    <property type="entry name" value="Hyaluronidase"/>
</dbReference>
<dbReference type="InterPro" id="IPR001329">
    <property type="entry name" value="Venom_Hyaluronidase"/>
</dbReference>
<dbReference type="PANTHER" id="PTHR11769">
    <property type="entry name" value="HYALURONIDASE"/>
    <property type="match status" value="1"/>
</dbReference>
<dbReference type="PANTHER" id="PTHR11769:SF35">
    <property type="entry name" value="HYALURONIDASE"/>
    <property type="match status" value="1"/>
</dbReference>
<dbReference type="Pfam" id="PF01630">
    <property type="entry name" value="Glyco_hydro_56"/>
    <property type="match status" value="1"/>
</dbReference>
<dbReference type="PIRSF" id="PIRSF038193">
    <property type="entry name" value="Hyaluronidase"/>
    <property type="match status" value="1"/>
</dbReference>
<dbReference type="PRINTS" id="PR00846">
    <property type="entry name" value="GLHYDRLASE56"/>
</dbReference>
<dbReference type="PRINTS" id="PR00847">
    <property type="entry name" value="HYALURONDASE"/>
</dbReference>
<dbReference type="SUPFAM" id="SSF51445">
    <property type="entry name" value="(Trans)glycosidases"/>
    <property type="match status" value="1"/>
</dbReference>